<name>UBIE_PSEPF</name>
<gene>
    <name evidence="1" type="primary">ubiE</name>
    <name type="ordered locus">Pfl01_0387</name>
</gene>
<evidence type="ECO:0000255" key="1">
    <source>
        <dbReference type="HAMAP-Rule" id="MF_01813"/>
    </source>
</evidence>
<dbReference type="EC" id="2.1.1.163" evidence="1"/>
<dbReference type="EC" id="2.1.1.201" evidence="1"/>
<dbReference type="EMBL" id="CP000094">
    <property type="protein sequence ID" value="ABA72131.1"/>
    <property type="molecule type" value="Genomic_DNA"/>
</dbReference>
<dbReference type="RefSeq" id="WP_007952418.1">
    <property type="nucleotide sequence ID" value="NC_007492.2"/>
</dbReference>
<dbReference type="SMR" id="Q3KJC5"/>
<dbReference type="KEGG" id="pfo:Pfl01_0387"/>
<dbReference type="eggNOG" id="COG2226">
    <property type="taxonomic scope" value="Bacteria"/>
</dbReference>
<dbReference type="HOGENOM" id="CLU_037990_0_0_6"/>
<dbReference type="UniPathway" id="UPA00079">
    <property type="reaction ID" value="UER00169"/>
</dbReference>
<dbReference type="UniPathway" id="UPA00232"/>
<dbReference type="Proteomes" id="UP000002704">
    <property type="component" value="Chromosome"/>
</dbReference>
<dbReference type="GO" id="GO:0008425">
    <property type="term" value="F:2-methoxy-6-polyprenyl-1,4-benzoquinol methyltransferase activity"/>
    <property type="evidence" value="ECO:0007669"/>
    <property type="project" value="UniProtKB-UniRule"/>
</dbReference>
<dbReference type="GO" id="GO:0043770">
    <property type="term" value="F:demethylmenaquinone methyltransferase activity"/>
    <property type="evidence" value="ECO:0007669"/>
    <property type="project" value="UniProtKB-UniRule"/>
</dbReference>
<dbReference type="GO" id="GO:0009060">
    <property type="term" value="P:aerobic respiration"/>
    <property type="evidence" value="ECO:0007669"/>
    <property type="project" value="UniProtKB-UniRule"/>
</dbReference>
<dbReference type="GO" id="GO:0009234">
    <property type="term" value="P:menaquinone biosynthetic process"/>
    <property type="evidence" value="ECO:0007669"/>
    <property type="project" value="UniProtKB-UniRule"/>
</dbReference>
<dbReference type="GO" id="GO:0032259">
    <property type="term" value="P:methylation"/>
    <property type="evidence" value="ECO:0007669"/>
    <property type="project" value="UniProtKB-KW"/>
</dbReference>
<dbReference type="CDD" id="cd02440">
    <property type="entry name" value="AdoMet_MTases"/>
    <property type="match status" value="1"/>
</dbReference>
<dbReference type="FunFam" id="3.40.50.150:FF:000014">
    <property type="entry name" value="Ubiquinone/menaquinone biosynthesis C-methyltransferase UbiE"/>
    <property type="match status" value="1"/>
</dbReference>
<dbReference type="Gene3D" id="3.40.50.150">
    <property type="entry name" value="Vaccinia Virus protein VP39"/>
    <property type="match status" value="1"/>
</dbReference>
<dbReference type="HAMAP" id="MF_01813">
    <property type="entry name" value="MenG_UbiE_methyltr"/>
    <property type="match status" value="1"/>
</dbReference>
<dbReference type="InterPro" id="IPR029063">
    <property type="entry name" value="SAM-dependent_MTases_sf"/>
</dbReference>
<dbReference type="InterPro" id="IPR004033">
    <property type="entry name" value="UbiE/COQ5_MeTrFase"/>
</dbReference>
<dbReference type="InterPro" id="IPR023576">
    <property type="entry name" value="UbiE/COQ5_MeTrFase_CS"/>
</dbReference>
<dbReference type="NCBIfam" id="TIGR01934">
    <property type="entry name" value="MenG_MenH_UbiE"/>
    <property type="match status" value="1"/>
</dbReference>
<dbReference type="NCBIfam" id="NF001240">
    <property type="entry name" value="PRK00216.1-1"/>
    <property type="match status" value="1"/>
</dbReference>
<dbReference type="NCBIfam" id="NF001244">
    <property type="entry name" value="PRK00216.1-5"/>
    <property type="match status" value="1"/>
</dbReference>
<dbReference type="PANTHER" id="PTHR43591:SF24">
    <property type="entry name" value="2-METHOXY-6-POLYPRENYL-1,4-BENZOQUINOL METHYLASE, MITOCHONDRIAL"/>
    <property type="match status" value="1"/>
</dbReference>
<dbReference type="PANTHER" id="PTHR43591">
    <property type="entry name" value="METHYLTRANSFERASE"/>
    <property type="match status" value="1"/>
</dbReference>
<dbReference type="Pfam" id="PF01209">
    <property type="entry name" value="Ubie_methyltran"/>
    <property type="match status" value="1"/>
</dbReference>
<dbReference type="SUPFAM" id="SSF53335">
    <property type="entry name" value="S-adenosyl-L-methionine-dependent methyltransferases"/>
    <property type="match status" value="1"/>
</dbReference>
<dbReference type="PROSITE" id="PS51608">
    <property type="entry name" value="SAM_MT_UBIE"/>
    <property type="match status" value="1"/>
</dbReference>
<dbReference type="PROSITE" id="PS01183">
    <property type="entry name" value="UBIE_1"/>
    <property type="match status" value="1"/>
</dbReference>
<dbReference type="PROSITE" id="PS01184">
    <property type="entry name" value="UBIE_2"/>
    <property type="match status" value="1"/>
</dbReference>
<accession>Q3KJC5</accession>
<sequence>MTDQRKGSDAEPTTHFGFKNVPESQKAEKVAEVFHSVAAKYDLMNDLLSGGMHRLWKRFAIELSGVRAGNRVLDIAGGTGDLTKKFSHLVGPTGQVVLADINESMLKVGRDRLLDVGVSGNVEFVQADAEKLPFPDNHFDCVTIAFGLRNVTHKEDALRSMLRVLKPGGRLLVLEFSKPTNALMSKAYDAYSFAFMPLMGKLITNDSESYRYLAESIRMHPNQETLKSMMVDAGFDRVTYHNMTAGIVALHRGIKP</sequence>
<reference key="1">
    <citation type="journal article" date="2009" name="Genome Biol.">
        <title>Genomic and genetic analyses of diversity and plant interactions of Pseudomonas fluorescens.</title>
        <authorList>
            <person name="Silby M.W."/>
            <person name="Cerdeno-Tarraga A.M."/>
            <person name="Vernikos G.S."/>
            <person name="Giddens S.R."/>
            <person name="Jackson R.W."/>
            <person name="Preston G.M."/>
            <person name="Zhang X.-X."/>
            <person name="Moon C.D."/>
            <person name="Gehrig S.M."/>
            <person name="Godfrey S.A.C."/>
            <person name="Knight C.G."/>
            <person name="Malone J.G."/>
            <person name="Robinson Z."/>
            <person name="Spiers A.J."/>
            <person name="Harris S."/>
            <person name="Challis G.L."/>
            <person name="Yaxley A.M."/>
            <person name="Harris D."/>
            <person name="Seeger K."/>
            <person name="Murphy L."/>
            <person name="Rutter S."/>
            <person name="Squares R."/>
            <person name="Quail M.A."/>
            <person name="Saunders E."/>
            <person name="Mavromatis K."/>
            <person name="Brettin T.S."/>
            <person name="Bentley S.D."/>
            <person name="Hothersall J."/>
            <person name="Stephens E."/>
            <person name="Thomas C.M."/>
            <person name="Parkhill J."/>
            <person name="Levy S.B."/>
            <person name="Rainey P.B."/>
            <person name="Thomson N.R."/>
        </authorList>
    </citation>
    <scope>NUCLEOTIDE SEQUENCE [LARGE SCALE GENOMIC DNA]</scope>
    <source>
        <strain>Pf0-1</strain>
    </source>
</reference>
<feature type="chain" id="PRO_1000056277" description="Ubiquinone/menaquinone biosynthesis C-methyltransferase UbiE">
    <location>
        <begin position="1"/>
        <end position="256"/>
    </location>
</feature>
<feature type="binding site" evidence="1">
    <location>
        <position position="79"/>
    </location>
    <ligand>
        <name>S-adenosyl-L-methionine</name>
        <dbReference type="ChEBI" id="CHEBI:59789"/>
    </ligand>
</feature>
<feature type="binding site" evidence="1">
    <location>
        <position position="100"/>
    </location>
    <ligand>
        <name>S-adenosyl-L-methionine</name>
        <dbReference type="ChEBI" id="CHEBI:59789"/>
    </ligand>
</feature>
<feature type="binding site" evidence="1">
    <location>
        <begin position="128"/>
        <end position="129"/>
    </location>
    <ligand>
        <name>S-adenosyl-L-methionine</name>
        <dbReference type="ChEBI" id="CHEBI:59789"/>
    </ligand>
</feature>
<protein>
    <recommendedName>
        <fullName evidence="1">Ubiquinone/menaquinone biosynthesis C-methyltransferase UbiE</fullName>
        <ecNumber evidence="1">2.1.1.163</ecNumber>
        <ecNumber evidence="1">2.1.1.201</ecNumber>
    </recommendedName>
    <alternativeName>
        <fullName evidence="1">2-methoxy-6-polyprenyl-1,4-benzoquinol methylase</fullName>
    </alternativeName>
    <alternativeName>
        <fullName evidence="1">Demethylmenaquinone methyltransferase</fullName>
    </alternativeName>
</protein>
<keyword id="KW-0474">Menaquinone biosynthesis</keyword>
<keyword id="KW-0489">Methyltransferase</keyword>
<keyword id="KW-0949">S-adenosyl-L-methionine</keyword>
<keyword id="KW-0808">Transferase</keyword>
<keyword id="KW-0831">Ubiquinone biosynthesis</keyword>
<proteinExistence type="inferred from homology"/>
<organism>
    <name type="scientific">Pseudomonas fluorescens (strain Pf0-1)</name>
    <dbReference type="NCBI Taxonomy" id="205922"/>
    <lineage>
        <taxon>Bacteria</taxon>
        <taxon>Pseudomonadati</taxon>
        <taxon>Pseudomonadota</taxon>
        <taxon>Gammaproteobacteria</taxon>
        <taxon>Pseudomonadales</taxon>
        <taxon>Pseudomonadaceae</taxon>
        <taxon>Pseudomonas</taxon>
    </lineage>
</organism>
<comment type="function">
    <text evidence="1">Methyltransferase required for the conversion of demethylmenaquinol (DMKH2) to menaquinol (MKH2) and the conversion of 2-polyprenyl-6-methoxy-1,4-benzoquinol (DDMQH2) to 2-polyprenyl-3-methyl-6-methoxy-1,4-benzoquinol (DMQH2).</text>
</comment>
<comment type="catalytic activity">
    <reaction evidence="1">
        <text>a 2-demethylmenaquinol + S-adenosyl-L-methionine = a menaquinol + S-adenosyl-L-homocysteine + H(+)</text>
        <dbReference type="Rhea" id="RHEA:42640"/>
        <dbReference type="Rhea" id="RHEA-COMP:9539"/>
        <dbReference type="Rhea" id="RHEA-COMP:9563"/>
        <dbReference type="ChEBI" id="CHEBI:15378"/>
        <dbReference type="ChEBI" id="CHEBI:18151"/>
        <dbReference type="ChEBI" id="CHEBI:55437"/>
        <dbReference type="ChEBI" id="CHEBI:57856"/>
        <dbReference type="ChEBI" id="CHEBI:59789"/>
        <dbReference type="EC" id="2.1.1.163"/>
    </reaction>
</comment>
<comment type="catalytic activity">
    <reaction evidence="1">
        <text>a 2-methoxy-6-(all-trans-polyprenyl)benzene-1,4-diol + S-adenosyl-L-methionine = a 5-methoxy-2-methyl-3-(all-trans-polyprenyl)benzene-1,4-diol + S-adenosyl-L-homocysteine + H(+)</text>
        <dbReference type="Rhea" id="RHEA:28286"/>
        <dbReference type="Rhea" id="RHEA-COMP:10858"/>
        <dbReference type="Rhea" id="RHEA-COMP:10859"/>
        <dbReference type="ChEBI" id="CHEBI:15378"/>
        <dbReference type="ChEBI" id="CHEBI:57856"/>
        <dbReference type="ChEBI" id="CHEBI:59789"/>
        <dbReference type="ChEBI" id="CHEBI:84166"/>
        <dbReference type="ChEBI" id="CHEBI:84167"/>
        <dbReference type="EC" id="2.1.1.201"/>
    </reaction>
</comment>
<comment type="pathway">
    <text evidence="1">Quinol/quinone metabolism; menaquinone biosynthesis; menaquinol from 1,4-dihydroxy-2-naphthoate: step 2/2.</text>
</comment>
<comment type="pathway">
    <text evidence="1">Cofactor biosynthesis; ubiquinone biosynthesis.</text>
</comment>
<comment type="similarity">
    <text evidence="1">Belongs to the class I-like SAM-binding methyltransferase superfamily. MenG/UbiE family.</text>
</comment>